<gene>
    <name evidence="1" type="primary">prfC</name>
    <name type="ordered locus">Mmwyl1_1011</name>
</gene>
<dbReference type="EMBL" id="CP000749">
    <property type="protein sequence ID" value="ABR69942.1"/>
    <property type="molecule type" value="Genomic_DNA"/>
</dbReference>
<dbReference type="SMR" id="A6VU13"/>
<dbReference type="STRING" id="400668.Mmwyl1_1011"/>
<dbReference type="KEGG" id="mmw:Mmwyl1_1011"/>
<dbReference type="eggNOG" id="COG4108">
    <property type="taxonomic scope" value="Bacteria"/>
</dbReference>
<dbReference type="HOGENOM" id="CLU_002794_2_1_6"/>
<dbReference type="OrthoDB" id="9804431at2"/>
<dbReference type="GO" id="GO:0005829">
    <property type="term" value="C:cytosol"/>
    <property type="evidence" value="ECO:0007669"/>
    <property type="project" value="TreeGrafter"/>
</dbReference>
<dbReference type="GO" id="GO:0005525">
    <property type="term" value="F:GTP binding"/>
    <property type="evidence" value="ECO:0007669"/>
    <property type="project" value="UniProtKB-UniRule"/>
</dbReference>
<dbReference type="GO" id="GO:0003924">
    <property type="term" value="F:GTPase activity"/>
    <property type="evidence" value="ECO:0007669"/>
    <property type="project" value="InterPro"/>
</dbReference>
<dbReference type="GO" id="GO:0097216">
    <property type="term" value="F:guanosine tetraphosphate binding"/>
    <property type="evidence" value="ECO:0007669"/>
    <property type="project" value="UniProtKB-ARBA"/>
</dbReference>
<dbReference type="GO" id="GO:0016150">
    <property type="term" value="F:translation release factor activity, codon nonspecific"/>
    <property type="evidence" value="ECO:0007669"/>
    <property type="project" value="TreeGrafter"/>
</dbReference>
<dbReference type="GO" id="GO:0016149">
    <property type="term" value="F:translation release factor activity, codon specific"/>
    <property type="evidence" value="ECO:0007669"/>
    <property type="project" value="UniProtKB-UniRule"/>
</dbReference>
<dbReference type="GO" id="GO:0006449">
    <property type="term" value="P:regulation of translational termination"/>
    <property type="evidence" value="ECO:0007669"/>
    <property type="project" value="UniProtKB-UniRule"/>
</dbReference>
<dbReference type="CDD" id="cd04169">
    <property type="entry name" value="RF3"/>
    <property type="match status" value="1"/>
</dbReference>
<dbReference type="CDD" id="cd03689">
    <property type="entry name" value="RF3_II"/>
    <property type="match status" value="1"/>
</dbReference>
<dbReference type="CDD" id="cd16259">
    <property type="entry name" value="RF3_III"/>
    <property type="match status" value="1"/>
</dbReference>
<dbReference type="FunFam" id="2.40.30.10:FF:000040">
    <property type="entry name" value="Peptide chain release factor 3"/>
    <property type="match status" value="1"/>
</dbReference>
<dbReference type="FunFam" id="3.30.70.3280:FF:000001">
    <property type="entry name" value="Peptide chain release factor 3"/>
    <property type="match status" value="1"/>
</dbReference>
<dbReference type="FunFam" id="3.40.50.300:FF:000542">
    <property type="entry name" value="Peptide chain release factor 3"/>
    <property type="match status" value="1"/>
</dbReference>
<dbReference type="Gene3D" id="3.40.50.300">
    <property type="entry name" value="P-loop containing nucleotide triphosphate hydrolases"/>
    <property type="match status" value="2"/>
</dbReference>
<dbReference type="Gene3D" id="3.30.70.3280">
    <property type="entry name" value="Peptide chain release factor 3, domain III"/>
    <property type="match status" value="1"/>
</dbReference>
<dbReference type="HAMAP" id="MF_00072">
    <property type="entry name" value="Rel_fac_3"/>
    <property type="match status" value="1"/>
</dbReference>
<dbReference type="InterPro" id="IPR053905">
    <property type="entry name" value="EF-G-like_DII"/>
</dbReference>
<dbReference type="InterPro" id="IPR035647">
    <property type="entry name" value="EFG_III/V"/>
</dbReference>
<dbReference type="InterPro" id="IPR031157">
    <property type="entry name" value="G_TR_CS"/>
</dbReference>
<dbReference type="InterPro" id="IPR027417">
    <property type="entry name" value="P-loop_NTPase"/>
</dbReference>
<dbReference type="InterPro" id="IPR004548">
    <property type="entry name" value="PrfC"/>
</dbReference>
<dbReference type="InterPro" id="IPR032090">
    <property type="entry name" value="RF3_C"/>
</dbReference>
<dbReference type="InterPro" id="IPR038467">
    <property type="entry name" value="RF3_dom_3_sf"/>
</dbReference>
<dbReference type="InterPro" id="IPR041732">
    <property type="entry name" value="RF3_GTP-bd"/>
</dbReference>
<dbReference type="InterPro" id="IPR005225">
    <property type="entry name" value="Small_GTP-bd"/>
</dbReference>
<dbReference type="InterPro" id="IPR000795">
    <property type="entry name" value="T_Tr_GTP-bd_dom"/>
</dbReference>
<dbReference type="InterPro" id="IPR009000">
    <property type="entry name" value="Transl_B-barrel_sf"/>
</dbReference>
<dbReference type="NCBIfam" id="TIGR00503">
    <property type="entry name" value="prfC"/>
    <property type="match status" value="1"/>
</dbReference>
<dbReference type="NCBIfam" id="NF001964">
    <property type="entry name" value="PRK00741.1"/>
    <property type="match status" value="1"/>
</dbReference>
<dbReference type="NCBIfam" id="TIGR00231">
    <property type="entry name" value="small_GTP"/>
    <property type="match status" value="1"/>
</dbReference>
<dbReference type="PANTHER" id="PTHR43556">
    <property type="entry name" value="PEPTIDE CHAIN RELEASE FACTOR RF3"/>
    <property type="match status" value="1"/>
</dbReference>
<dbReference type="PANTHER" id="PTHR43556:SF2">
    <property type="entry name" value="PEPTIDE CHAIN RELEASE FACTOR RF3"/>
    <property type="match status" value="1"/>
</dbReference>
<dbReference type="Pfam" id="PF22042">
    <property type="entry name" value="EF-G_D2"/>
    <property type="match status" value="1"/>
</dbReference>
<dbReference type="Pfam" id="PF00009">
    <property type="entry name" value="GTP_EFTU"/>
    <property type="match status" value="1"/>
</dbReference>
<dbReference type="Pfam" id="PF16658">
    <property type="entry name" value="RF3_C"/>
    <property type="match status" value="1"/>
</dbReference>
<dbReference type="PRINTS" id="PR00315">
    <property type="entry name" value="ELONGATNFCT"/>
</dbReference>
<dbReference type="SUPFAM" id="SSF54980">
    <property type="entry name" value="EF-G C-terminal domain-like"/>
    <property type="match status" value="1"/>
</dbReference>
<dbReference type="SUPFAM" id="SSF52540">
    <property type="entry name" value="P-loop containing nucleoside triphosphate hydrolases"/>
    <property type="match status" value="1"/>
</dbReference>
<dbReference type="SUPFAM" id="SSF50447">
    <property type="entry name" value="Translation proteins"/>
    <property type="match status" value="1"/>
</dbReference>
<dbReference type="PROSITE" id="PS00301">
    <property type="entry name" value="G_TR_1"/>
    <property type="match status" value="1"/>
</dbReference>
<dbReference type="PROSITE" id="PS51722">
    <property type="entry name" value="G_TR_2"/>
    <property type="match status" value="1"/>
</dbReference>
<accession>A6VU13</accession>
<protein>
    <recommendedName>
        <fullName evidence="1">Peptide chain release factor 3</fullName>
        <shortName evidence="1">RF-3</shortName>
    </recommendedName>
</protein>
<keyword id="KW-0963">Cytoplasm</keyword>
<keyword id="KW-0342">GTP-binding</keyword>
<keyword id="KW-0547">Nucleotide-binding</keyword>
<keyword id="KW-0648">Protein biosynthesis</keyword>
<evidence type="ECO:0000255" key="1">
    <source>
        <dbReference type="HAMAP-Rule" id="MF_00072"/>
    </source>
</evidence>
<comment type="function">
    <text evidence="1">Increases the formation of ribosomal termination complexes and stimulates activities of RF-1 and RF-2. It binds guanine nucleotides and has strong preference for UGA stop codons. It may interact directly with the ribosome. The stimulation of RF-1 and RF-2 is significantly reduced by GTP and GDP, but not by GMP.</text>
</comment>
<comment type="subcellular location">
    <subcellularLocation>
        <location evidence="1">Cytoplasm</location>
    </subcellularLocation>
</comment>
<comment type="similarity">
    <text evidence="1">Belongs to the TRAFAC class translation factor GTPase superfamily. Classic translation factor GTPase family. PrfC subfamily.</text>
</comment>
<name>RF3_MARMS</name>
<proteinExistence type="inferred from homology"/>
<feature type="chain" id="PRO_1000075162" description="Peptide chain release factor 3">
    <location>
        <begin position="1"/>
        <end position="528"/>
    </location>
</feature>
<feature type="domain" description="tr-type G">
    <location>
        <begin position="11"/>
        <end position="279"/>
    </location>
</feature>
<feature type="binding site" evidence="1">
    <location>
        <begin position="20"/>
        <end position="27"/>
    </location>
    <ligand>
        <name>GTP</name>
        <dbReference type="ChEBI" id="CHEBI:37565"/>
    </ligand>
</feature>
<feature type="binding site" evidence="1">
    <location>
        <begin position="88"/>
        <end position="92"/>
    </location>
    <ligand>
        <name>GTP</name>
        <dbReference type="ChEBI" id="CHEBI:37565"/>
    </ligand>
</feature>
<feature type="binding site" evidence="1">
    <location>
        <begin position="142"/>
        <end position="145"/>
    </location>
    <ligand>
        <name>GTP</name>
        <dbReference type="ChEBI" id="CHEBI:37565"/>
    </ligand>
</feature>
<reference key="1">
    <citation type="submission" date="2007-06" db="EMBL/GenBank/DDBJ databases">
        <title>Complete sequence of Marinomonas sp. MWYL1.</title>
        <authorList>
            <consortium name="US DOE Joint Genome Institute"/>
            <person name="Copeland A."/>
            <person name="Lucas S."/>
            <person name="Lapidus A."/>
            <person name="Barry K."/>
            <person name="Glavina del Rio T."/>
            <person name="Dalin E."/>
            <person name="Tice H."/>
            <person name="Pitluck S."/>
            <person name="Kiss H."/>
            <person name="Brettin T."/>
            <person name="Bruce D."/>
            <person name="Detter J.C."/>
            <person name="Han C."/>
            <person name="Schmutz J."/>
            <person name="Larimer F."/>
            <person name="Land M."/>
            <person name="Hauser L."/>
            <person name="Kyrpides N."/>
            <person name="Kim E."/>
            <person name="Johnston A.W.B."/>
            <person name="Todd J.D."/>
            <person name="Rogers R."/>
            <person name="Wexler M."/>
            <person name="Bond P.L."/>
            <person name="Li Y."/>
            <person name="Richardson P."/>
        </authorList>
    </citation>
    <scope>NUCLEOTIDE SEQUENCE [LARGE SCALE GENOMIC DNA]</scope>
    <source>
        <strain>MWYL1</strain>
    </source>
</reference>
<sequence length="528" mass="60096">MADQNFLNEVSDRRTFAIISHPDAGKTTITEKLLLLGQLIQTAGSVKGRKGDKHATSDWMAMEKQRGISITSSVMQFPYKDRIVNLLDTPGHEDFSEDTYRTLTAVDSVLMIIDGAKGVEDRTIKLMDVCRLRDTPILTFINKMDRDIRDPIELLDEVEEVLKIAAAPITWPIGMSDFFKGVYNLYTDTIHVFVRGRGHTLMDDIRIEGLQSNEAKELLGDDWESYVDEIELVRGASHEFDHDAYLRGELTPVFFGTALSNFGVREMLDGFVEWAPAPIDRETNSRKVEAKEEKFSGFIFKIQANMDPKHRDRIAFMRVCSGTYSRGMKMRHCRIGKDIKVTDAVSFTAGDREGVEEAFSGDIIGLHNHGTIQIGDTFTEGEDLKFTGIPHFAPELFRRVRLKDPMKMKALQKGLQQLSEEGSTQLFMPQRNNELIVGAVGQLQYEVVAYRLKDEYKVECIYEAVNVNSARWVECDDAKKFEEFKNKCRDNLAIDGGGHLTYLAPTRVNLMMAEEKWPQVRFHSTREH</sequence>
<organism>
    <name type="scientific">Marinomonas sp. (strain MWYL1)</name>
    <dbReference type="NCBI Taxonomy" id="400668"/>
    <lineage>
        <taxon>Bacteria</taxon>
        <taxon>Pseudomonadati</taxon>
        <taxon>Pseudomonadota</taxon>
        <taxon>Gammaproteobacteria</taxon>
        <taxon>Oceanospirillales</taxon>
        <taxon>Oceanospirillaceae</taxon>
        <taxon>Marinomonas</taxon>
    </lineage>
</organism>